<comment type="function">
    <text evidence="1">Cleaves peptides in various proteins in a process that requires ATP hydrolysis. Has a chymotrypsin-like activity. Plays a major role in the degradation of misfolded proteins.</text>
</comment>
<comment type="catalytic activity">
    <reaction evidence="1">
        <text>Hydrolysis of proteins to small peptides in the presence of ATP and magnesium. alpha-casein is the usual test substrate. In the absence of ATP, only oligopeptides shorter than five residues are hydrolyzed (such as succinyl-Leu-Tyr-|-NHMec, and Leu-Tyr-Leu-|-Tyr-Trp, in which cleavage of the -Tyr-|-Leu- and -Tyr-|-Trp bonds also occurs).</text>
        <dbReference type="EC" id="3.4.21.92"/>
    </reaction>
</comment>
<comment type="subunit">
    <text evidence="1">Fourteen ClpP subunits assemble into 2 heptameric rings which stack back to back to give a disk-like structure with a central cavity, resembling the structure of eukaryotic proteasomes.</text>
</comment>
<comment type="subcellular location">
    <subcellularLocation>
        <location evidence="1">Cytoplasm</location>
    </subcellularLocation>
</comment>
<comment type="similarity">
    <text evidence="1">Belongs to the peptidase S14 family.</text>
</comment>
<accession>Q63V41</accession>
<organism>
    <name type="scientific">Burkholderia pseudomallei (strain K96243)</name>
    <dbReference type="NCBI Taxonomy" id="272560"/>
    <lineage>
        <taxon>Bacteria</taxon>
        <taxon>Pseudomonadati</taxon>
        <taxon>Pseudomonadota</taxon>
        <taxon>Betaproteobacteria</taxon>
        <taxon>Burkholderiales</taxon>
        <taxon>Burkholderiaceae</taxon>
        <taxon>Burkholderia</taxon>
        <taxon>pseudomallei group</taxon>
    </lineage>
</organism>
<feature type="chain" id="PRO_0000179523" description="ATP-dependent Clp protease proteolytic subunit">
    <location>
        <begin position="1"/>
        <end position="217"/>
    </location>
</feature>
<feature type="active site" description="Nucleophile" evidence="1">
    <location>
        <position position="121"/>
    </location>
</feature>
<feature type="active site" evidence="1">
    <location>
        <position position="146"/>
    </location>
</feature>
<sequence>MINRAQLLDTLASQAPRDFEAQALGLVPIVVETSGRGERSYDIYSRLLKERIVFMVGEVNDQTANLVVAQLLFLESENPDKDISLYINSPGGSVSAGMAIYDTMQFVKPDVSTLCMGLAASMGAFLLASGAKGKRYALPNARVMIHQPLGGARGQASDIEIQAREILYLRDRLNHLLAHHTGQDVERIARDTDRDNFMSSEDAKAYGLIDHVSTKRP</sequence>
<name>CLPP_BURPS</name>
<keyword id="KW-0963">Cytoplasm</keyword>
<keyword id="KW-0378">Hydrolase</keyword>
<keyword id="KW-0645">Protease</keyword>
<keyword id="KW-1185">Reference proteome</keyword>
<keyword id="KW-0720">Serine protease</keyword>
<evidence type="ECO:0000255" key="1">
    <source>
        <dbReference type="HAMAP-Rule" id="MF_00444"/>
    </source>
</evidence>
<protein>
    <recommendedName>
        <fullName evidence="1">ATP-dependent Clp protease proteolytic subunit</fullName>
        <ecNumber evidence="1">3.4.21.92</ecNumber>
    </recommendedName>
    <alternativeName>
        <fullName evidence="1">Endopeptidase Clp</fullName>
    </alternativeName>
</protein>
<gene>
    <name evidence="1" type="primary">clpP</name>
    <name type="ordered locus">BPSL1403</name>
</gene>
<reference key="1">
    <citation type="journal article" date="2004" name="Proc. Natl. Acad. Sci. U.S.A.">
        <title>Genomic plasticity of the causative agent of melioidosis, Burkholderia pseudomallei.</title>
        <authorList>
            <person name="Holden M.T.G."/>
            <person name="Titball R.W."/>
            <person name="Peacock S.J."/>
            <person name="Cerdeno-Tarraga A.-M."/>
            <person name="Atkins T."/>
            <person name="Crossman L.C."/>
            <person name="Pitt T."/>
            <person name="Churcher C."/>
            <person name="Mungall K.L."/>
            <person name="Bentley S.D."/>
            <person name="Sebaihia M."/>
            <person name="Thomson N.R."/>
            <person name="Bason N."/>
            <person name="Beacham I.R."/>
            <person name="Brooks K."/>
            <person name="Brown K.A."/>
            <person name="Brown N.F."/>
            <person name="Challis G.L."/>
            <person name="Cherevach I."/>
            <person name="Chillingworth T."/>
            <person name="Cronin A."/>
            <person name="Crossett B."/>
            <person name="Davis P."/>
            <person name="DeShazer D."/>
            <person name="Feltwell T."/>
            <person name="Fraser A."/>
            <person name="Hance Z."/>
            <person name="Hauser H."/>
            <person name="Holroyd S."/>
            <person name="Jagels K."/>
            <person name="Keith K.E."/>
            <person name="Maddison M."/>
            <person name="Moule S."/>
            <person name="Price C."/>
            <person name="Quail M.A."/>
            <person name="Rabbinowitsch E."/>
            <person name="Rutherford K."/>
            <person name="Sanders M."/>
            <person name="Simmonds M."/>
            <person name="Songsivilai S."/>
            <person name="Stevens K."/>
            <person name="Tumapa S."/>
            <person name="Vesaratchavest M."/>
            <person name="Whitehead S."/>
            <person name="Yeats C."/>
            <person name="Barrell B.G."/>
            <person name="Oyston P.C.F."/>
            <person name="Parkhill J."/>
        </authorList>
    </citation>
    <scope>NUCLEOTIDE SEQUENCE [LARGE SCALE GENOMIC DNA]</scope>
    <source>
        <strain>K96243</strain>
    </source>
</reference>
<proteinExistence type="inferred from homology"/>
<dbReference type="EC" id="3.4.21.92" evidence="1"/>
<dbReference type="EMBL" id="BX571965">
    <property type="protein sequence ID" value="CAH35404.1"/>
    <property type="molecule type" value="Genomic_DNA"/>
</dbReference>
<dbReference type="RefSeq" id="WP_004193408.1">
    <property type="nucleotide sequence ID" value="NZ_CP009538.1"/>
</dbReference>
<dbReference type="RefSeq" id="YP_108025.1">
    <property type="nucleotide sequence ID" value="NC_006350.1"/>
</dbReference>
<dbReference type="SMR" id="Q63V41"/>
<dbReference type="STRING" id="272560.BPSL1403"/>
<dbReference type="MEROPS" id="S14.001"/>
<dbReference type="GeneID" id="92979196"/>
<dbReference type="KEGG" id="bps:BPSL1403"/>
<dbReference type="PATRIC" id="fig|272560.51.peg.3415"/>
<dbReference type="eggNOG" id="COG0740">
    <property type="taxonomic scope" value="Bacteria"/>
</dbReference>
<dbReference type="Proteomes" id="UP000000605">
    <property type="component" value="Chromosome 1"/>
</dbReference>
<dbReference type="GO" id="GO:0005737">
    <property type="term" value="C:cytoplasm"/>
    <property type="evidence" value="ECO:0007669"/>
    <property type="project" value="UniProtKB-SubCell"/>
</dbReference>
<dbReference type="GO" id="GO:0009368">
    <property type="term" value="C:endopeptidase Clp complex"/>
    <property type="evidence" value="ECO:0007669"/>
    <property type="project" value="TreeGrafter"/>
</dbReference>
<dbReference type="GO" id="GO:0004176">
    <property type="term" value="F:ATP-dependent peptidase activity"/>
    <property type="evidence" value="ECO:0007669"/>
    <property type="project" value="InterPro"/>
</dbReference>
<dbReference type="GO" id="GO:0051117">
    <property type="term" value="F:ATPase binding"/>
    <property type="evidence" value="ECO:0007669"/>
    <property type="project" value="TreeGrafter"/>
</dbReference>
<dbReference type="GO" id="GO:0004252">
    <property type="term" value="F:serine-type endopeptidase activity"/>
    <property type="evidence" value="ECO:0007669"/>
    <property type="project" value="UniProtKB-UniRule"/>
</dbReference>
<dbReference type="GO" id="GO:0006515">
    <property type="term" value="P:protein quality control for misfolded or incompletely synthesized proteins"/>
    <property type="evidence" value="ECO:0007669"/>
    <property type="project" value="TreeGrafter"/>
</dbReference>
<dbReference type="CDD" id="cd07017">
    <property type="entry name" value="S14_ClpP_2"/>
    <property type="match status" value="1"/>
</dbReference>
<dbReference type="FunFam" id="3.90.226.10:FF:000001">
    <property type="entry name" value="ATP-dependent Clp protease proteolytic subunit"/>
    <property type="match status" value="1"/>
</dbReference>
<dbReference type="Gene3D" id="3.90.226.10">
    <property type="entry name" value="2-enoyl-CoA Hydratase, Chain A, domain 1"/>
    <property type="match status" value="1"/>
</dbReference>
<dbReference type="HAMAP" id="MF_00444">
    <property type="entry name" value="ClpP"/>
    <property type="match status" value="1"/>
</dbReference>
<dbReference type="InterPro" id="IPR001907">
    <property type="entry name" value="ClpP"/>
</dbReference>
<dbReference type="InterPro" id="IPR029045">
    <property type="entry name" value="ClpP/crotonase-like_dom_sf"/>
</dbReference>
<dbReference type="InterPro" id="IPR023562">
    <property type="entry name" value="ClpP/TepA"/>
</dbReference>
<dbReference type="InterPro" id="IPR033135">
    <property type="entry name" value="ClpP_His_AS"/>
</dbReference>
<dbReference type="InterPro" id="IPR018215">
    <property type="entry name" value="ClpP_Ser_AS"/>
</dbReference>
<dbReference type="NCBIfam" id="TIGR00493">
    <property type="entry name" value="clpP"/>
    <property type="match status" value="1"/>
</dbReference>
<dbReference type="NCBIfam" id="NF001368">
    <property type="entry name" value="PRK00277.1"/>
    <property type="match status" value="1"/>
</dbReference>
<dbReference type="NCBIfam" id="NF009205">
    <property type="entry name" value="PRK12553.1"/>
    <property type="match status" value="1"/>
</dbReference>
<dbReference type="PANTHER" id="PTHR10381">
    <property type="entry name" value="ATP-DEPENDENT CLP PROTEASE PROTEOLYTIC SUBUNIT"/>
    <property type="match status" value="1"/>
</dbReference>
<dbReference type="PANTHER" id="PTHR10381:SF70">
    <property type="entry name" value="ATP-DEPENDENT CLP PROTEASE PROTEOLYTIC SUBUNIT"/>
    <property type="match status" value="1"/>
</dbReference>
<dbReference type="Pfam" id="PF00574">
    <property type="entry name" value="CLP_protease"/>
    <property type="match status" value="1"/>
</dbReference>
<dbReference type="PRINTS" id="PR00127">
    <property type="entry name" value="CLPPROTEASEP"/>
</dbReference>
<dbReference type="SUPFAM" id="SSF52096">
    <property type="entry name" value="ClpP/crotonase"/>
    <property type="match status" value="1"/>
</dbReference>
<dbReference type="PROSITE" id="PS00382">
    <property type="entry name" value="CLP_PROTEASE_HIS"/>
    <property type="match status" value="1"/>
</dbReference>
<dbReference type="PROSITE" id="PS00381">
    <property type="entry name" value="CLP_PROTEASE_SER"/>
    <property type="match status" value="1"/>
</dbReference>